<sequence>MDQPTWKRPHRAKFAGVSDAAQQRQMPNLASIDLNLLVDLEALLQYRHITQAAQHVGRSQPAMSRALSRLRGMLKDDLLVAGSRGLVLTPLAECLTQMLPSVLDAIRQMMNLSLAPAQRRWKVTMAMPDHQAVVLLPHLLPRLHERAPHLDIVTDPLLGGALGLLEQGEIDVVVGQMGAAPLGYLRRRLYADSFTCVLRHNHPALAQEWTIEAFAALRHVAIASEPDELFGQIYDRLTKLGLQRGDPMVVSTVLTAAVLIAATDSVLVVPSRVATRVAAMLSLAVIPPPVELRPYEVALIWHERCHRDPEHRWLRGEIAAAASTAG</sequence>
<comment type="function">
    <text>Acts in trans to stimulate nod gene expression via nodD3 and exo gene expression via SyrA.</text>
</comment>
<comment type="miscellaneous">
    <text>Has two translation start codons in proximity to each other leading to a protein of 326 or 301 AA.</text>
</comment>
<comment type="similarity">
    <text evidence="2">Belongs to the LysR transcriptional regulatory family.</text>
</comment>
<comment type="sequence caution" evidence="2">
    <conflict type="erroneous initiation">
        <sequence resource="EMBL-CDS" id="CAA43667"/>
    </conflict>
</comment>
<name>SYRM_RHIME</name>
<keyword id="KW-0010">Activator</keyword>
<keyword id="KW-0238">DNA-binding</keyword>
<keyword id="KW-0536">Nodulation</keyword>
<keyword id="KW-0614">Plasmid</keyword>
<keyword id="KW-1185">Reference proteome</keyword>
<keyword id="KW-0804">Transcription</keyword>
<keyword id="KW-0805">Transcription regulation</keyword>
<evidence type="ECO:0000255" key="1">
    <source>
        <dbReference type="PROSITE-ProRule" id="PRU00253"/>
    </source>
</evidence>
<evidence type="ECO:0000305" key="2"/>
<proteinExistence type="inferred from homology"/>
<accession>P18561</accession>
<accession>Q53001</accession>
<geneLocation type="plasmid">
    <name>pSymA</name>
    <name>megaplasmid 1</name>
</geneLocation>
<organism>
    <name type="scientific">Rhizobium meliloti (strain 1021)</name>
    <name type="common">Ensifer meliloti</name>
    <name type="synonym">Sinorhizobium meliloti</name>
    <dbReference type="NCBI Taxonomy" id="266834"/>
    <lineage>
        <taxon>Bacteria</taxon>
        <taxon>Pseudomonadati</taxon>
        <taxon>Pseudomonadota</taxon>
        <taxon>Alphaproteobacteria</taxon>
        <taxon>Hyphomicrobiales</taxon>
        <taxon>Rhizobiaceae</taxon>
        <taxon>Sinorhizobium/Ensifer group</taxon>
        <taxon>Sinorhizobium</taxon>
    </lineage>
</organism>
<reference key="1">
    <citation type="journal article" date="1990" name="J. Bacteriol.">
        <title>DNA sequence and translational product of a new nodulation-regulatory locus: syrM has sequence similarity to NodD proteins.</title>
        <authorList>
            <person name="Barnett M.J."/>
            <person name="Long S.R."/>
        </authorList>
    </citation>
    <scope>NUCLEOTIDE SEQUENCE [GENOMIC DNA]</scope>
    <source>
        <strain>RCR2011 / SU47</strain>
    </source>
</reference>
<reference key="2">
    <citation type="journal article" date="1991" name="Mol. Microbiol.">
        <title>Involvement of the syrM and nodD3 genes of Rhizobium meliloti in nod gene activation and in optimal nodulation of the plant host.</title>
        <authorList>
            <person name="Kondorosi E."/>
            <person name="Buire M."/>
            <person name="Cren M."/>
            <person name="Iyer N."/>
            <person name="Hoffmann B."/>
            <person name="Kondorosi A."/>
        </authorList>
    </citation>
    <scope>NUCLEOTIDE SEQUENCE [GENOMIC DNA]</scope>
    <source>
        <strain>AK631</strain>
    </source>
</reference>
<reference key="3">
    <citation type="journal article" date="2001" name="Proc. Natl. Acad. Sci. U.S.A.">
        <title>Nucleotide sequence and predicted functions of the entire Sinorhizobium meliloti pSymA megaplasmid.</title>
        <authorList>
            <person name="Barnett M.J."/>
            <person name="Fisher R.F."/>
            <person name="Jones T."/>
            <person name="Komp C."/>
            <person name="Abola A.P."/>
            <person name="Barloy-Hubler F."/>
            <person name="Bowser L."/>
            <person name="Capela D."/>
            <person name="Galibert F."/>
            <person name="Gouzy J."/>
            <person name="Gurjal M."/>
            <person name="Hong A."/>
            <person name="Huizar L."/>
            <person name="Hyman R.W."/>
            <person name="Kahn D."/>
            <person name="Kahn M.L."/>
            <person name="Kalman S."/>
            <person name="Keating D.H."/>
            <person name="Palm C."/>
            <person name="Peck M.C."/>
            <person name="Surzycki R."/>
            <person name="Wells D.H."/>
            <person name="Yeh K.-C."/>
            <person name="Davis R.W."/>
            <person name="Federspiel N.A."/>
            <person name="Long S.R."/>
        </authorList>
    </citation>
    <scope>NUCLEOTIDE SEQUENCE [LARGE SCALE GENOMIC DNA]</scope>
    <source>
        <strain>1021</strain>
    </source>
</reference>
<reference key="4">
    <citation type="journal article" date="2001" name="Science">
        <title>The composite genome of the legume symbiont Sinorhizobium meliloti.</title>
        <authorList>
            <person name="Galibert F."/>
            <person name="Finan T.M."/>
            <person name="Long S.R."/>
            <person name="Puehler A."/>
            <person name="Abola P."/>
            <person name="Ampe F."/>
            <person name="Barloy-Hubler F."/>
            <person name="Barnett M.J."/>
            <person name="Becker A."/>
            <person name="Boistard P."/>
            <person name="Bothe G."/>
            <person name="Boutry M."/>
            <person name="Bowser L."/>
            <person name="Buhrmester J."/>
            <person name="Cadieu E."/>
            <person name="Capela D."/>
            <person name="Chain P."/>
            <person name="Cowie A."/>
            <person name="Davis R.W."/>
            <person name="Dreano S."/>
            <person name="Federspiel N.A."/>
            <person name="Fisher R.F."/>
            <person name="Gloux S."/>
            <person name="Godrie T."/>
            <person name="Goffeau A."/>
            <person name="Golding B."/>
            <person name="Gouzy J."/>
            <person name="Gurjal M."/>
            <person name="Hernandez-Lucas I."/>
            <person name="Hong A."/>
            <person name="Huizar L."/>
            <person name="Hyman R.W."/>
            <person name="Jones T."/>
            <person name="Kahn D."/>
            <person name="Kahn M.L."/>
            <person name="Kalman S."/>
            <person name="Keating D.H."/>
            <person name="Kiss E."/>
            <person name="Komp C."/>
            <person name="Lelaure V."/>
            <person name="Masuy D."/>
            <person name="Palm C."/>
            <person name="Peck M.C."/>
            <person name="Pohl T.M."/>
            <person name="Portetelle D."/>
            <person name="Purnelle B."/>
            <person name="Ramsperger U."/>
            <person name="Surzycki R."/>
            <person name="Thebault P."/>
            <person name="Vandenbol M."/>
            <person name="Vorhoelter F.J."/>
            <person name="Weidner S."/>
            <person name="Wells D.H."/>
            <person name="Wong K."/>
            <person name="Yeh K.-C."/>
            <person name="Batut J."/>
        </authorList>
    </citation>
    <scope>NUCLEOTIDE SEQUENCE [LARGE SCALE GENOMIC DNA]</scope>
    <source>
        <strain>1021</strain>
    </source>
</reference>
<dbReference type="EMBL" id="M33495">
    <property type="protein sequence ID" value="AAB38371.1"/>
    <property type="molecule type" value="Genomic_DNA"/>
</dbReference>
<dbReference type="EMBL" id="X61396">
    <property type="protein sequence ID" value="CAA43667.1"/>
    <property type="status" value="ALT_INIT"/>
    <property type="molecule type" value="Genomic_DNA"/>
</dbReference>
<dbReference type="EMBL" id="AE006469">
    <property type="protein sequence ID" value="AAK65120.1"/>
    <property type="molecule type" value="Genomic_DNA"/>
</dbReference>
<dbReference type="PIR" id="A44505">
    <property type="entry name" value="A44505"/>
</dbReference>
<dbReference type="PIR" id="F95319">
    <property type="entry name" value="F95319"/>
</dbReference>
<dbReference type="PIR" id="S18575">
    <property type="entry name" value="S18575"/>
</dbReference>
<dbReference type="RefSeq" id="NP_435708.1">
    <property type="nucleotide sequence ID" value="NC_003037.1"/>
</dbReference>
<dbReference type="RefSeq" id="WP_010967445.1">
    <property type="nucleotide sequence ID" value="NC_003037.1"/>
</dbReference>
<dbReference type="SMR" id="P18561"/>
<dbReference type="EnsemblBacteria" id="AAK65120">
    <property type="protein sequence ID" value="AAK65120"/>
    <property type="gene ID" value="SMa0849"/>
</dbReference>
<dbReference type="KEGG" id="sme:SMa0849"/>
<dbReference type="PATRIC" id="fig|266834.11.peg.473"/>
<dbReference type="HOGENOM" id="CLU_039613_39_0_5"/>
<dbReference type="OrthoDB" id="528082at2"/>
<dbReference type="Proteomes" id="UP000001976">
    <property type="component" value="Plasmid pSymA"/>
</dbReference>
<dbReference type="GO" id="GO:0003677">
    <property type="term" value="F:DNA binding"/>
    <property type="evidence" value="ECO:0007669"/>
    <property type="project" value="UniProtKB-KW"/>
</dbReference>
<dbReference type="GO" id="GO:0003700">
    <property type="term" value="F:DNA-binding transcription factor activity"/>
    <property type="evidence" value="ECO:0007669"/>
    <property type="project" value="InterPro"/>
</dbReference>
<dbReference type="CDD" id="cd08467">
    <property type="entry name" value="PBP2_SyrM"/>
    <property type="match status" value="1"/>
</dbReference>
<dbReference type="Gene3D" id="3.40.190.10">
    <property type="entry name" value="Periplasmic binding protein-like II"/>
    <property type="match status" value="2"/>
</dbReference>
<dbReference type="Gene3D" id="1.10.10.10">
    <property type="entry name" value="Winged helix-like DNA-binding domain superfamily/Winged helix DNA-binding domain"/>
    <property type="match status" value="1"/>
</dbReference>
<dbReference type="InterPro" id="IPR050389">
    <property type="entry name" value="LysR-type_TF"/>
</dbReference>
<dbReference type="InterPro" id="IPR005119">
    <property type="entry name" value="LysR_subst-bd"/>
</dbReference>
<dbReference type="InterPro" id="IPR037417">
    <property type="entry name" value="SyrM_PBP2"/>
</dbReference>
<dbReference type="InterPro" id="IPR000847">
    <property type="entry name" value="Tscrpt_reg_HTH_LysR"/>
</dbReference>
<dbReference type="InterPro" id="IPR036388">
    <property type="entry name" value="WH-like_DNA-bd_sf"/>
</dbReference>
<dbReference type="InterPro" id="IPR036390">
    <property type="entry name" value="WH_DNA-bd_sf"/>
</dbReference>
<dbReference type="PANTHER" id="PTHR30118">
    <property type="entry name" value="HTH-TYPE TRANSCRIPTIONAL REGULATOR LEUO-RELATED"/>
    <property type="match status" value="1"/>
</dbReference>
<dbReference type="PANTHER" id="PTHR30118:SF15">
    <property type="entry name" value="TRANSCRIPTIONAL REGULATORY PROTEIN"/>
    <property type="match status" value="1"/>
</dbReference>
<dbReference type="Pfam" id="PF00126">
    <property type="entry name" value="HTH_1"/>
    <property type="match status" value="1"/>
</dbReference>
<dbReference type="Pfam" id="PF03466">
    <property type="entry name" value="LysR_substrate"/>
    <property type="match status" value="1"/>
</dbReference>
<dbReference type="SUPFAM" id="SSF53850">
    <property type="entry name" value="Periplasmic binding protein-like II"/>
    <property type="match status" value="1"/>
</dbReference>
<dbReference type="SUPFAM" id="SSF46785">
    <property type="entry name" value="Winged helix' DNA-binding domain"/>
    <property type="match status" value="1"/>
</dbReference>
<dbReference type="PROSITE" id="PS50931">
    <property type="entry name" value="HTH_LYSR"/>
    <property type="match status" value="1"/>
</dbReference>
<feature type="chain" id="PRO_0000105753" description="HTH-type transcriptional regulator SyrM">
    <location>
        <begin position="1"/>
        <end position="326"/>
    </location>
</feature>
<feature type="domain" description="HTH lysR-type" evidence="1">
    <location>
        <begin position="32"/>
        <end position="89"/>
    </location>
</feature>
<feature type="DNA-binding region" description="H-T-H motif" evidence="1">
    <location>
        <begin position="49"/>
        <end position="68"/>
    </location>
</feature>
<feature type="sequence conflict" description="In Ref. 2." evidence="2" ref="2">
    <original>PHRAKFAGVSDAAQQR</original>
    <variation>RIGPNLPVSVTPHNK</variation>
    <location>
        <begin position="9"/>
        <end position="24"/>
    </location>
</feature>
<feature type="sequence conflict" description="In Ref. 2; CAA43667." evidence="2" ref="2">
    <original>D</original>
    <variation>G</variation>
    <location>
        <position position="227"/>
    </location>
</feature>
<protein>
    <recommendedName>
        <fullName>HTH-type transcriptional regulator SyrM</fullName>
    </recommendedName>
    <alternativeName>
        <fullName>Symbiotic regulator</fullName>
    </alternativeName>
</protein>
<gene>
    <name type="primary">syrM</name>
    <name type="ordered locus">RA0462</name>
    <name type="ORF">SMa0849</name>
</gene>